<dbReference type="EC" id="3.1.-.-" evidence="2"/>
<dbReference type="EMBL" id="L43967">
    <property type="protein sequence ID" value="AAC71225.1"/>
    <property type="molecule type" value="Genomic_DNA"/>
</dbReference>
<dbReference type="PIR" id="I64200">
    <property type="entry name" value="I64200"/>
</dbReference>
<dbReference type="RefSeq" id="WP_009885976.1">
    <property type="nucleotide sequence ID" value="NC_000908.2"/>
</dbReference>
<dbReference type="SMR" id="P47255"/>
<dbReference type="FunCoup" id="P47255">
    <property type="interactions" value="188"/>
</dbReference>
<dbReference type="STRING" id="243273.MG_009"/>
<dbReference type="GeneID" id="88282124"/>
<dbReference type="KEGG" id="mge:MG_009"/>
<dbReference type="eggNOG" id="COG0084">
    <property type="taxonomic scope" value="Bacteria"/>
</dbReference>
<dbReference type="HOGENOM" id="CLU_031506_4_0_14"/>
<dbReference type="InParanoid" id="P47255"/>
<dbReference type="OrthoDB" id="9810005at2"/>
<dbReference type="BioCyc" id="MGEN243273:G1GJ2-9-MONOMER"/>
<dbReference type="Proteomes" id="UP000000807">
    <property type="component" value="Chromosome"/>
</dbReference>
<dbReference type="GO" id="GO:0005829">
    <property type="term" value="C:cytosol"/>
    <property type="evidence" value="ECO:0000318"/>
    <property type="project" value="GO_Central"/>
</dbReference>
<dbReference type="GO" id="GO:0004536">
    <property type="term" value="F:DNA nuclease activity"/>
    <property type="evidence" value="ECO:0007669"/>
    <property type="project" value="InterPro"/>
</dbReference>
<dbReference type="GO" id="GO:0046872">
    <property type="term" value="F:metal ion binding"/>
    <property type="evidence" value="ECO:0007669"/>
    <property type="project" value="UniProtKB-KW"/>
</dbReference>
<dbReference type="CDD" id="cd01310">
    <property type="entry name" value="TatD_DNAse"/>
    <property type="match status" value="1"/>
</dbReference>
<dbReference type="FunFam" id="3.20.20.140:FF:000114">
    <property type="entry name" value="Hydrolase, TatD family"/>
    <property type="match status" value="1"/>
</dbReference>
<dbReference type="Gene3D" id="3.20.20.140">
    <property type="entry name" value="Metal-dependent hydrolases"/>
    <property type="match status" value="1"/>
</dbReference>
<dbReference type="InterPro" id="IPR018228">
    <property type="entry name" value="DNase_TatD-rel_CS"/>
</dbReference>
<dbReference type="InterPro" id="IPR032466">
    <property type="entry name" value="Metal_Hydrolase"/>
</dbReference>
<dbReference type="InterPro" id="IPR001130">
    <property type="entry name" value="TatD-like"/>
</dbReference>
<dbReference type="InterPro" id="IPR015991">
    <property type="entry name" value="TatD/YcfH-like"/>
</dbReference>
<dbReference type="NCBIfam" id="TIGR00010">
    <property type="entry name" value="YchF/TatD family DNA exonuclease"/>
    <property type="match status" value="1"/>
</dbReference>
<dbReference type="PANTHER" id="PTHR46124">
    <property type="entry name" value="D-AMINOACYL-TRNA DEACYLASE"/>
    <property type="match status" value="1"/>
</dbReference>
<dbReference type="PANTHER" id="PTHR46124:SF2">
    <property type="entry name" value="D-AMINOACYL-TRNA DEACYLASE"/>
    <property type="match status" value="1"/>
</dbReference>
<dbReference type="Pfam" id="PF01026">
    <property type="entry name" value="TatD_DNase"/>
    <property type="match status" value="1"/>
</dbReference>
<dbReference type="PIRSF" id="PIRSF005902">
    <property type="entry name" value="DNase_TatD"/>
    <property type="match status" value="1"/>
</dbReference>
<dbReference type="SUPFAM" id="SSF51556">
    <property type="entry name" value="Metallo-dependent hydrolases"/>
    <property type="match status" value="1"/>
</dbReference>
<dbReference type="PROSITE" id="PS01137">
    <property type="entry name" value="TATD_1"/>
    <property type="match status" value="1"/>
</dbReference>
<dbReference type="PROSITE" id="PS01091">
    <property type="entry name" value="TATD_3"/>
    <property type="match status" value="1"/>
</dbReference>
<protein>
    <recommendedName>
        <fullName evidence="2">Uncharacterized metal-dependent hydrolase MG009</fullName>
        <ecNumber evidence="2">3.1.-.-</ecNumber>
    </recommendedName>
</protein>
<comment type="cofactor">
    <cofactor evidence="1">
        <name>a divalent metal cation</name>
        <dbReference type="ChEBI" id="CHEBI:60240"/>
    </cofactor>
    <text evidence="1">Binds 2 divalent metal cations per subunit.</text>
</comment>
<comment type="similarity">
    <text evidence="2">Belongs to the metallo-dependent hydrolases superfamily. TatD-type hydrolase family.</text>
</comment>
<keyword id="KW-0378">Hydrolase</keyword>
<keyword id="KW-0479">Metal-binding</keyword>
<keyword id="KW-1185">Reference proteome</keyword>
<evidence type="ECO:0000250" key="1">
    <source>
        <dbReference type="UniProtKB" id="P0AFQ7"/>
    </source>
</evidence>
<evidence type="ECO:0000305" key="2"/>
<reference key="1">
    <citation type="journal article" date="1995" name="Science">
        <title>The minimal gene complement of Mycoplasma genitalium.</title>
        <authorList>
            <person name="Fraser C.M."/>
            <person name="Gocayne J.D."/>
            <person name="White O."/>
            <person name="Adams M.D."/>
            <person name="Clayton R.A."/>
            <person name="Fleischmann R.D."/>
            <person name="Bult C.J."/>
            <person name="Kerlavage A.R."/>
            <person name="Sutton G.G."/>
            <person name="Kelley J.M."/>
            <person name="Fritchman J.L."/>
            <person name="Weidman J.F."/>
            <person name="Small K.V."/>
            <person name="Sandusky M."/>
            <person name="Fuhrmann J.L."/>
            <person name="Nguyen D.T."/>
            <person name="Utterback T.R."/>
            <person name="Saudek D.M."/>
            <person name="Phillips C.A."/>
            <person name="Merrick J.M."/>
            <person name="Tomb J.-F."/>
            <person name="Dougherty B.A."/>
            <person name="Bott K.F."/>
            <person name="Hu P.-C."/>
            <person name="Lucier T.S."/>
            <person name="Peterson S.N."/>
            <person name="Smith H.O."/>
            <person name="Hutchison C.A. III"/>
            <person name="Venter J.C."/>
        </authorList>
    </citation>
    <scope>NUCLEOTIDE SEQUENCE [LARGE SCALE GENOMIC DNA]</scope>
    <source>
        <strain>ATCC 33530 / DSM 19775 / NCTC 10195 / G37</strain>
    </source>
</reference>
<gene>
    <name type="ordered locus">MG009</name>
</gene>
<accession>P47255</accession>
<proteinExistence type="inferred from homology"/>
<sequence>MEYFDAHCHLNCEPLLSEIEKSIANFKLINLKANVVGTDLDNSKIAVELAKKYPDLLKATIGIHPNDVHLVDFKKTKKQLNELLINNRNFISCIGEYGFDYHYTTEFIELQNKFFEMQFEIAETNKLVHMLHIRDAHEKIYEILTRLKPTQPVIFHCFSQDINIAKKLLSLKDLNIDIFFSIPGIVTFKNAQALHEALKIIPSELLLSETDSPWLTPSPFRGKVNWPEYVVHTVSTVAEIKKIEIAEMKRIIVKNAKKLFWH</sequence>
<feature type="chain" id="PRO_0000202006" description="Uncharacterized metal-dependent hydrolase MG009">
    <location>
        <begin position="1"/>
        <end position="262"/>
    </location>
</feature>
<feature type="binding site" evidence="1">
    <location>
        <position position="7"/>
    </location>
    <ligand>
        <name>a divalent metal cation</name>
        <dbReference type="ChEBI" id="CHEBI:60240"/>
        <label>1</label>
    </ligand>
</feature>
<feature type="binding site" evidence="1">
    <location>
        <position position="9"/>
    </location>
    <ligand>
        <name>a divalent metal cation</name>
        <dbReference type="ChEBI" id="CHEBI:60240"/>
        <label>1</label>
    </ligand>
</feature>
<feature type="binding site" evidence="1">
    <location>
        <position position="96"/>
    </location>
    <ligand>
        <name>a divalent metal cation</name>
        <dbReference type="ChEBI" id="CHEBI:60240"/>
        <label>1</label>
    </ligand>
</feature>
<feature type="binding site" evidence="1">
    <location>
        <position position="96"/>
    </location>
    <ligand>
        <name>a divalent metal cation</name>
        <dbReference type="ChEBI" id="CHEBI:60240"/>
        <label>2</label>
    </ligand>
</feature>
<feature type="binding site" evidence="1">
    <location>
        <position position="132"/>
    </location>
    <ligand>
        <name>a divalent metal cation</name>
        <dbReference type="ChEBI" id="CHEBI:60240"/>
        <label>2</label>
    </ligand>
</feature>
<feature type="binding site" evidence="1">
    <location>
        <position position="156"/>
    </location>
    <ligand>
        <name>a divalent metal cation</name>
        <dbReference type="ChEBI" id="CHEBI:60240"/>
        <label>2</label>
    </ligand>
</feature>
<feature type="binding site" evidence="1">
    <location>
        <position position="211"/>
    </location>
    <ligand>
        <name>a divalent metal cation</name>
        <dbReference type="ChEBI" id="CHEBI:60240"/>
        <label>1</label>
    </ligand>
</feature>
<organism>
    <name type="scientific">Mycoplasma genitalium (strain ATCC 33530 / DSM 19775 / NCTC 10195 / G37)</name>
    <name type="common">Mycoplasmoides genitalium</name>
    <dbReference type="NCBI Taxonomy" id="243273"/>
    <lineage>
        <taxon>Bacteria</taxon>
        <taxon>Bacillati</taxon>
        <taxon>Mycoplasmatota</taxon>
        <taxon>Mycoplasmoidales</taxon>
        <taxon>Mycoplasmoidaceae</taxon>
        <taxon>Mycoplasmoides</taxon>
    </lineage>
</organism>
<name>Y009_MYCGE</name>